<feature type="chain" id="PRO_0000248334" description="PAXIP1-associated glutamate-rich protein 1">
    <location>
        <begin position="1"/>
        <end position="254"/>
    </location>
</feature>
<feature type="region of interest" description="Disordered" evidence="3">
    <location>
        <begin position="1"/>
        <end position="111"/>
    </location>
</feature>
<feature type="region of interest" description="Sufficient for interaction with NCOA1" evidence="5">
    <location>
        <begin position="116"/>
        <end position="160"/>
    </location>
</feature>
<feature type="region of interest" description="Disordered" evidence="3">
    <location>
        <begin position="127"/>
        <end position="254"/>
    </location>
</feature>
<feature type="region of interest" description="Sufficient for interaction with ESR1" evidence="5">
    <location>
        <begin position="161"/>
        <end position="254"/>
    </location>
</feature>
<feature type="compositionally biased region" description="Basic and acidic residues" evidence="3">
    <location>
        <begin position="45"/>
        <end position="62"/>
    </location>
</feature>
<feature type="compositionally biased region" description="Acidic residues" evidence="3">
    <location>
        <begin position="78"/>
        <end position="98"/>
    </location>
</feature>
<feature type="compositionally biased region" description="Acidic residues" evidence="3">
    <location>
        <begin position="142"/>
        <end position="159"/>
    </location>
</feature>
<feature type="compositionally biased region" description="Basic and acidic residues" evidence="3">
    <location>
        <begin position="195"/>
        <end position="223"/>
    </location>
</feature>
<feature type="modified residue" description="Phosphothreonine" evidence="1">
    <location>
        <position position="138"/>
    </location>
</feature>
<feature type="modified residue" description="Phosphoserine" evidence="1">
    <location>
        <position position="143"/>
    </location>
</feature>
<feature type="modified residue" description="Phosphoserine" evidence="1">
    <location>
        <position position="148"/>
    </location>
</feature>
<feature type="modified residue" description="Phosphoserine" evidence="1">
    <location>
        <position position="237"/>
    </location>
</feature>
<name>PAGR1_HUMAN</name>
<comment type="function">
    <text evidence="2 5 6 7 9">Its association with the histone methyltransferase MLL2/MLL3 complex is suggesting a role in epigenetic transcriptional activation. However, in association with PAXIP1/PTIP is proposed to function at least in part independently of the MLL2/MLL3 complex. Proposed to be recruited by PAXIP1 to sites of DNA damage where the PAGR1:PAXIP1 complex is required for cell survival in response to DNA damage independently of the MLL2/MLL3 complex (PubMed:19124460). However, its function in DNA damage has been questioned (By similarity). During immunoglobulin class switching in activated B-cells is involved in transcription regulation of downstream switch regions at the immunoglobulin heavy-chain (Igh) locus independently of the MLL2/MLL3 complex (By similarity). Involved in both estrogen receptor-regulated gene transcription and estrogen-stimulated G1/S cell-cycle transition (PubMed:19039327). Acts as a transcriptional cofactor for nuclear hormone receptors. Inhibits the induction properties of several steroid receptors such as NR3C1, AR and PPARG; the mechanism of inhibition appears to be gene-dependent (PubMed:23161582).</text>
</comment>
<comment type="subunit">
    <text evidence="2 4 5 6 7">Component of the KMT2 family MLL2/MLL3 complex (also named ASCOM complex), at least composed of the HMTs KMT2D and/or KMT2C, the common subunits ASH2L, RBBP5, WDR5 and DPY30, and the complex type-specific subunits PAXIP1/PTIP, PAGR1, NCOA6 and KDM6A; PAXIP1 is required for the association with the MLL2/MLL3 complex (PubMed:17500065). Forms a constitutive complex with PAXIP1/PTIP independently of the MLL2/MLL3 complex (By similarity). Interacts with NCOA1, ESR1, NR3C1, AR (PubMed:19039327, PubMed:19124460, PubMed:23161582).</text>
</comment>
<comment type="interaction">
    <interactant intactId="EBI-2372223">
        <id>Q9BTK6</id>
    </interactant>
    <interactant intactId="EBI-78473">
        <id>P03372</id>
        <label>ESR1</label>
    </interactant>
    <organismsDiffer>false</organismsDiffer>
    <experiments>5</experiments>
</comment>
<comment type="interaction">
    <interactant intactId="EBI-2372223">
        <id>Q9BTK6</id>
    </interactant>
    <interactant intactId="EBI-455189">
        <id>Q15788</id>
        <label>NCOA1</label>
    </interactant>
    <organismsDiffer>false</organismsDiffer>
    <experiments>4</experiments>
</comment>
<comment type="interaction">
    <interactant intactId="EBI-2372223">
        <id>Q9BTK6</id>
    </interactant>
    <interactant intactId="EBI-743225">
        <id>Q6ZW49</id>
        <label>PAXIP1</label>
    </interactant>
    <organismsDiffer>false</organismsDiffer>
    <experiments>10</experiments>
</comment>
<comment type="interaction">
    <interactant intactId="EBI-2372223">
        <id>Q9BTK6</id>
    </interactant>
    <interactant intactId="EBI-1187143">
        <id>P06536</id>
        <label>Nr3c1</label>
    </interactant>
    <organismsDiffer>true</organismsDiffer>
    <experiments>2</experiments>
</comment>
<comment type="interaction">
    <interactant intactId="EBI-2372223">
        <id>Q9BTK6</id>
    </interactant>
    <interactant intactId="EBI-1395317">
        <id>Q6NZQ4</id>
        <label>Paxip1</label>
    </interactant>
    <organismsDiffer>true</organismsDiffer>
    <experiments>5</experiments>
</comment>
<comment type="subcellular location">
    <subcellularLocation>
        <location evidence="5">Nucleus</location>
    </subcellularLocation>
</comment>
<comment type="tissue specificity">
    <text evidence="5">Ubiquitously expressed.</text>
</comment>
<comment type="caution">
    <text evidence="9">The terminology of MLL proteins in mammalia is not consistent also concerning the terminology of MLL protein-containing complexes. The decribed MLL2/MLL3 complex is commonly described as MLL3/MLL4 complex in literature.</text>
</comment>
<dbReference type="EMBL" id="EF195235">
    <property type="protein sequence ID" value="ABM69249.1"/>
    <property type="molecule type" value="mRNA"/>
</dbReference>
<dbReference type="EMBL" id="AC009133">
    <property type="status" value="NOT_ANNOTATED_CDS"/>
    <property type="molecule type" value="Genomic_DNA"/>
</dbReference>
<dbReference type="EMBL" id="AC120114">
    <property type="status" value="NOT_ANNOTATED_CDS"/>
    <property type="molecule type" value="Genomic_DNA"/>
</dbReference>
<dbReference type="EMBL" id="CH471238">
    <property type="protein sequence ID" value="EAW79989.1"/>
    <property type="molecule type" value="Genomic_DNA"/>
</dbReference>
<dbReference type="EMBL" id="BC003640">
    <property type="protein sequence ID" value="AAH03640.1"/>
    <property type="molecule type" value="mRNA"/>
</dbReference>
<dbReference type="CCDS" id="CCDS10655.1"/>
<dbReference type="RefSeq" id="NP_078792.1">
    <property type="nucleotide sequence ID" value="NM_024516.4"/>
</dbReference>
<dbReference type="BioGRID" id="122672">
    <property type="interactions" value="50"/>
</dbReference>
<dbReference type="ComplexPortal" id="CPX-7091">
    <property type="entry name" value="Histone-lysine N-methyltransferase complex, KMT2C variant"/>
</dbReference>
<dbReference type="ComplexPortal" id="CPX-7104">
    <property type="entry name" value="Histone-lysine N-methyltransferase complex, KMT2D variant"/>
</dbReference>
<dbReference type="CORUM" id="Q9BTK6"/>
<dbReference type="FunCoup" id="Q9BTK6">
    <property type="interactions" value="989"/>
</dbReference>
<dbReference type="IntAct" id="Q9BTK6">
    <property type="interactions" value="39"/>
</dbReference>
<dbReference type="MINT" id="Q9BTK6"/>
<dbReference type="STRING" id="9606.ENSP00000326519"/>
<dbReference type="GlyGen" id="Q9BTK6">
    <property type="glycosylation" value="4 sites, 1 O-linked glycan (4 sites)"/>
</dbReference>
<dbReference type="iPTMnet" id="Q9BTK6"/>
<dbReference type="PhosphoSitePlus" id="Q9BTK6"/>
<dbReference type="BioMuta" id="PAGR1"/>
<dbReference type="DMDM" id="74733129"/>
<dbReference type="jPOST" id="Q9BTK6"/>
<dbReference type="MassIVE" id="Q9BTK6"/>
<dbReference type="PaxDb" id="9606-ENSP00000326519"/>
<dbReference type="PeptideAtlas" id="Q9BTK6"/>
<dbReference type="ProteomicsDB" id="78994"/>
<dbReference type="Pumba" id="Q9BTK6"/>
<dbReference type="Antibodypedia" id="75851">
    <property type="antibodies" value="76 antibodies from 22 providers"/>
</dbReference>
<dbReference type="DNASU" id="79447"/>
<dbReference type="Ensembl" id="ENST00000320330.8">
    <property type="protein sequence ID" value="ENSP00000326519.6"/>
    <property type="gene ID" value="ENSG00000280789.2"/>
</dbReference>
<dbReference type="GeneID" id="79447"/>
<dbReference type="KEGG" id="hsa:79447"/>
<dbReference type="MANE-Select" id="ENST00000320330.8">
    <property type="protein sequence ID" value="ENSP00000326519.6"/>
    <property type="RefSeq nucleotide sequence ID" value="NM_024516.4"/>
    <property type="RefSeq protein sequence ID" value="NP_078792.1"/>
</dbReference>
<dbReference type="UCSC" id="uc002dug.5">
    <property type="organism name" value="human"/>
</dbReference>
<dbReference type="AGR" id="HGNC:28707"/>
<dbReference type="CTD" id="79447"/>
<dbReference type="DisGeNET" id="79447"/>
<dbReference type="GeneCards" id="PAGR1"/>
<dbReference type="HGNC" id="HGNC:28707">
    <property type="gene designation" value="PAGR1"/>
</dbReference>
<dbReference type="HPA" id="ENSG00000280789">
    <property type="expression patterns" value="Tissue enhanced (brain)"/>
</dbReference>
<dbReference type="MalaCards" id="PAGR1"/>
<dbReference type="MIM" id="612033">
    <property type="type" value="gene"/>
</dbReference>
<dbReference type="neXtProt" id="NX_Q9BTK6"/>
<dbReference type="OpenTargets" id="ENSG00000280789"/>
<dbReference type="PharmGKB" id="PA142672260"/>
<dbReference type="VEuPathDB" id="HostDB:ENSG00000280789"/>
<dbReference type="eggNOG" id="ENOG502S0T8">
    <property type="taxonomic scope" value="Eukaryota"/>
</dbReference>
<dbReference type="GeneTree" id="ENSGT00390000016049"/>
<dbReference type="HOGENOM" id="CLU_070349_0_0_1"/>
<dbReference type="InParanoid" id="Q9BTK6"/>
<dbReference type="OMA" id="HIMRTGR"/>
<dbReference type="OrthoDB" id="10067843at2759"/>
<dbReference type="PAN-GO" id="Q9BTK6">
    <property type="GO annotations" value="5 GO annotations based on evolutionary models"/>
</dbReference>
<dbReference type="PhylomeDB" id="Q9BTK6"/>
<dbReference type="TreeFam" id="TF326621"/>
<dbReference type="PathwayCommons" id="Q9BTK6"/>
<dbReference type="Reactome" id="R-HSA-5617472">
    <property type="pathway name" value="Activation of anterior HOX genes in hindbrain development during early embryogenesis"/>
</dbReference>
<dbReference type="Reactome" id="R-HSA-9772755">
    <property type="pathway name" value="Formation of WDR5-containing histone-modifying complexes"/>
</dbReference>
<dbReference type="Reactome" id="R-HSA-9818564">
    <property type="pathway name" value="Epigenetic regulation of gene expression by MLL3 and MLL4 complexes"/>
</dbReference>
<dbReference type="Reactome" id="R-HSA-9841922">
    <property type="pathway name" value="MLL4 and MLL3 complexes regulate expression of PPARG target genes in adipogenesis and hepatic steatosis"/>
</dbReference>
<dbReference type="SignaLink" id="Q9BTK6"/>
<dbReference type="BioGRID-ORCS" id="79447">
    <property type="hits" value="143 hits in 1155 CRISPR screens"/>
</dbReference>
<dbReference type="ChiTaRS" id="PAGR1">
    <property type="organism name" value="human"/>
</dbReference>
<dbReference type="GenomeRNAi" id="79447"/>
<dbReference type="Pharos" id="Q9BTK6">
    <property type="development level" value="Tbio"/>
</dbReference>
<dbReference type="PRO" id="PR:Q9BTK6"/>
<dbReference type="Proteomes" id="UP000005640">
    <property type="component" value="Chromosome 16"/>
</dbReference>
<dbReference type="RNAct" id="Q9BTK6">
    <property type="molecule type" value="protein"/>
</dbReference>
<dbReference type="Bgee" id="ENSG00000280789">
    <property type="expression patterns" value="Expressed in right hemisphere of cerebellum and 163 other cell types or tissues"/>
</dbReference>
<dbReference type="GO" id="GO:0035097">
    <property type="term" value="C:histone methyltransferase complex"/>
    <property type="evidence" value="ECO:0000314"/>
    <property type="project" value="MGI"/>
</dbReference>
<dbReference type="GO" id="GO:0044666">
    <property type="term" value="C:MLL3/4 complex"/>
    <property type="evidence" value="ECO:0000314"/>
    <property type="project" value="UniProtKB"/>
</dbReference>
<dbReference type="GO" id="GO:0005654">
    <property type="term" value="C:nucleoplasm"/>
    <property type="evidence" value="ECO:0000304"/>
    <property type="project" value="Reactome"/>
</dbReference>
<dbReference type="GO" id="GO:0005634">
    <property type="term" value="C:nucleus"/>
    <property type="evidence" value="ECO:0000314"/>
    <property type="project" value="MGI"/>
</dbReference>
<dbReference type="GO" id="GO:0030331">
    <property type="term" value="F:nuclear estrogen receptor binding"/>
    <property type="evidence" value="ECO:0000314"/>
    <property type="project" value="UniProtKB"/>
</dbReference>
<dbReference type="GO" id="GO:0006310">
    <property type="term" value="P:DNA recombination"/>
    <property type="evidence" value="ECO:0007669"/>
    <property type="project" value="UniProtKB-KW"/>
</dbReference>
<dbReference type="GO" id="GO:0006281">
    <property type="term" value="P:DNA repair"/>
    <property type="evidence" value="ECO:0007669"/>
    <property type="project" value="UniProtKB-KW"/>
</dbReference>
<dbReference type="GO" id="GO:1902808">
    <property type="term" value="P:positive regulation of cell cycle G1/S phase transition"/>
    <property type="evidence" value="ECO:0000315"/>
    <property type="project" value="UniProtKB"/>
</dbReference>
<dbReference type="GO" id="GO:0033148">
    <property type="term" value="P:positive regulation of intracellular estrogen receptor signaling pathway"/>
    <property type="evidence" value="ECO:0000314"/>
    <property type="project" value="UniProtKB"/>
</dbReference>
<dbReference type="GO" id="GO:0045944">
    <property type="term" value="P:positive regulation of transcription by RNA polymerase II"/>
    <property type="evidence" value="ECO:0000314"/>
    <property type="project" value="UniProtKB"/>
</dbReference>
<dbReference type="InterPro" id="IPR028213">
    <property type="entry name" value="PA1"/>
</dbReference>
<dbReference type="PANTHER" id="PTHR28467">
    <property type="entry name" value="PAXIP1-ASSOCIATED GLUTAMATE-RICH PROTEIN 1"/>
    <property type="match status" value="1"/>
</dbReference>
<dbReference type="PANTHER" id="PTHR28467:SF1">
    <property type="entry name" value="PAXIP1-ASSOCIATED GLUTAMATE-RICH PROTEIN 1"/>
    <property type="match status" value="1"/>
</dbReference>
<dbReference type="Pfam" id="PF15364">
    <property type="entry name" value="PAXIP1_C"/>
    <property type="match status" value="1"/>
</dbReference>
<keyword id="KW-0227">DNA damage</keyword>
<keyword id="KW-0233">DNA recombination</keyword>
<keyword id="KW-0234">DNA repair</keyword>
<keyword id="KW-0539">Nucleus</keyword>
<keyword id="KW-0597">Phosphoprotein</keyword>
<keyword id="KW-1267">Proteomics identification</keyword>
<keyword id="KW-1185">Reference proteome</keyword>
<keyword id="KW-0804">Transcription</keyword>
<keyword id="KW-0805">Transcription regulation</keyword>
<proteinExistence type="evidence at protein level"/>
<gene>
    <name type="primary">PAGR1</name>
    <name type="synonym">C16orf53</name>
    <name type="synonym">PA1</name>
</gene>
<reference key="1">
    <citation type="journal article" date="2004" name="Nature">
        <title>The sequence and analysis of duplication-rich human chromosome 16.</title>
        <authorList>
            <person name="Martin J."/>
            <person name="Han C."/>
            <person name="Gordon L.A."/>
            <person name="Terry A."/>
            <person name="Prabhakar S."/>
            <person name="She X."/>
            <person name="Xie G."/>
            <person name="Hellsten U."/>
            <person name="Chan Y.M."/>
            <person name="Altherr M."/>
            <person name="Couronne O."/>
            <person name="Aerts A."/>
            <person name="Bajorek E."/>
            <person name="Black S."/>
            <person name="Blumer H."/>
            <person name="Branscomb E."/>
            <person name="Brown N.C."/>
            <person name="Bruno W.J."/>
            <person name="Buckingham J.M."/>
            <person name="Callen D.F."/>
            <person name="Campbell C.S."/>
            <person name="Campbell M.L."/>
            <person name="Campbell E.W."/>
            <person name="Caoile C."/>
            <person name="Challacombe J.F."/>
            <person name="Chasteen L.A."/>
            <person name="Chertkov O."/>
            <person name="Chi H.C."/>
            <person name="Christensen M."/>
            <person name="Clark L.M."/>
            <person name="Cohn J.D."/>
            <person name="Denys M."/>
            <person name="Detter J.C."/>
            <person name="Dickson M."/>
            <person name="Dimitrijevic-Bussod M."/>
            <person name="Escobar J."/>
            <person name="Fawcett J.J."/>
            <person name="Flowers D."/>
            <person name="Fotopulos D."/>
            <person name="Glavina T."/>
            <person name="Gomez M."/>
            <person name="Gonzales E."/>
            <person name="Goodstein D."/>
            <person name="Goodwin L.A."/>
            <person name="Grady D.L."/>
            <person name="Grigoriev I."/>
            <person name="Groza M."/>
            <person name="Hammon N."/>
            <person name="Hawkins T."/>
            <person name="Haydu L."/>
            <person name="Hildebrand C.E."/>
            <person name="Huang W."/>
            <person name="Israni S."/>
            <person name="Jett J."/>
            <person name="Jewett P.B."/>
            <person name="Kadner K."/>
            <person name="Kimball H."/>
            <person name="Kobayashi A."/>
            <person name="Krawczyk M.-C."/>
            <person name="Leyba T."/>
            <person name="Longmire J.L."/>
            <person name="Lopez F."/>
            <person name="Lou Y."/>
            <person name="Lowry S."/>
            <person name="Ludeman T."/>
            <person name="Manohar C.F."/>
            <person name="Mark G.A."/>
            <person name="McMurray K.L."/>
            <person name="Meincke L.J."/>
            <person name="Morgan J."/>
            <person name="Moyzis R.K."/>
            <person name="Mundt M.O."/>
            <person name="Munk A.C."/>
            <person name="Nandkeshwar R.D."/>
            <person name="Pitluck S."/>
            <person name="Pollard M."/>
            <person name="Predki P."/>
            <person name="Parson-Quintana B."/>
            <person name="Ramirez L."/>
            <person name="Rash S."/>
            <person name="Retterer J."/>
            <person name="Ricke D.O."/>
            <person name="Robinson D.L."/>
            <person name="Rodriguez A."/>
            <person name="Salamov A."/>
            <person name="Saunders E.H."/>
            <person name="Scott D."/>
            <person name="Shough T."/>
            <person name="Stallings R.L."/>
            <person name="Stalvey M."/>
            <person name="Sutherland R.D."/>
            <person name="Tapia R."/>
            <person name="Tesmer J.G."/>
            <person name="Thayer N."/>
            <person name="Thompson L.S."/>
            <person name="Tice H."/>
            <person name="Torney D.C."/>
            <person name="Tran-Gyamfi M."/>
            <person name="Tsai M."/>
            <person name="Ulanovsky L.E."/>
            <person name="Ustaszewska A."/>
            <person name="Vo N."/>
            <person name="White P.S."/>
            <person name="Williams A.L."/>
            <person name="Wills P.L."/>
            <person name="Wu J.-R."/>
            <person name="Wu K."/>
            <person name="Yang J."/>
            <person name="DeJong P."/>
            <person name="Bruce D."/>
            <person name="Doggett N.A."/>
            <person name="Deaven L."/>
            <person name="Schmutz J."/>
            <person name="Grimwood J."/>
            <person name="Richardson P."/>
            <person name="Rokhsar D.S."/>
            <person name="Eichler E.E."/>
            <person name="Gilna P."/>
            <person name="Lucas S.M."/>
            <person name="Myers R.M."/>
            <person name="Rubin E.M."/>
            <person name="Pennacchio L.A."/>
        </authorList>
    </citation>
    <scope>NUCLEOTIDE SEQUENCE [LARGE SCALE GENOMIC DNA]</scope>
</reference>
<reference key="2">
    <citation type="journal article" date="2007" name="J. Biol. Chem.">
        <title>PTIP associates with MLL3- and MLL4-containing histone H3 lysine 4 methyltransferase complex.</title>
        <authorList>
            <person name="Cho Y.-W."/>
            <person name="Hong T."/>
            <person name="Hong S."/>
            <person name="Guo H."/>
            <person name="Yu H."/>
            <person name="Kim D."/>
            <person name="Guszczynski T."/>
            <person name="Dressler G.R."/>
            <person name="Copeland T.D."/>
            <person name="Kalkum M."/>
            <person name="Ge K."/>
        </authorList>
    </citation>
    <scope>NUCLEOTIDE SEQUENCE [MRNA]</scope>
    <scope>IDENTIFICATION BY MASS SPECTROMETRY</scope>
    <scope>IDENTIFICATION IN THE MLL2/3 COMPLEX</scope>
</reference>
<reference key="3">
    <citation type="submission" date="2005-07" db="EMBL/GenBank/DDBJ databases">
        <authorList>
            <person name="Mural R.J."/>
            <person name="Istrail S."/>
            <person name="Sutton G.G."/>
            <person name="Florea L."/>
            <person name="Halpern A.L."/>
            <person name="Mobarry C.M."/>
            <person name="Lippert R."/>
            <person name="Walenz B."/>
            <person name="Shatkay H."/>
            <person name="Dew I."/>
            <person name="Miller J.R."/>
            <person name="Flanigan M.J."/>
            <person name="Edwards N.J."/>
            <person name="Bolanos R."/>
            <person name="Fasulo D."/>
            <person name="Halldorsson B.V."/>
            <person name="Hannenhalli S."/>
            <person name="Turner R."/>
            <person name="Yooseph S."/>
            <person name="Lu F."/>
            <person name="Nusskern D.R."/>
            <person name="Shue B.C."/>
            <person name="Zheng X.H."/>
            <person name="Zhong F."/>
            <person name="Delcher A.L."/>
            <person name="Huson D.H."/>
            <person name="Kravitz S.A."/>
            <person name="Mouchard L."/>
            <person name="Reinert K."/>
            <person name="Remington K.A."/>
            <person name="Clark A.G."/>
            <person name="Waterman M.S."/>
            <person name="Eichler E.E."/>
            <person name="Adams M.D."/>
            <person name="Hunkapiller M.W."/>
            <person name="Myers E.W."/>
            <person name="Venter J.C."/>
        </authorList>
    </citation>
    <scope>NUCLEOTIDE SEQUENCE [LARGE SCALE GENOMIC DNA]</scope>
</reference>
<reference key="4">
    <citation type="journal article" date="2004" name="Genome Res.">
        <title>The status, quality, and expansion of the NIH full-length cDNA project: the Mammalian Gene Collection (MGC).</title>
        <authorList>
            <consortium name="The MGC Project Team"/>
        </authorList>
    </citation>
    <scope>NUCLEOTIDE SEQUENCE [LARGE SCALE MRNA]</scope>
    <source>
        <tissue>Eye</tissue>
    </source>
</reference>
<reference key="5">
    <citation type="journal article" date="2009" name="EMBO Rep.">
        <title>GAS, a new glutamate-rich protein, interacts differentially with SRCs and is involved in oestrogen receptor function.</title>
        <authorList>
            <person name="Liang J."/>
            <person name="Zhang H."/>
            <person name="Zhang Y."/>
            <person name="Zhang Y."/>
            <person name="Shang Y."/>
        </authorList>
    </citation>
    <scope>FUNCTION</scope>
    <scope>TISSUE SPECIFICITY</scope>
    <scope>SUBCELLULAR LOCATION</scope>
    <scope>INTERACTION WITH NCOA1 AND ESR1</scope>
</reference>
<reference key="6">
    <citation type="journal article" date="2009" name="J. Biol. Chem.">
        <title>Accumulation of Pax2 transactivation domain interaction protein (PTIP) at sites of DNA breaks via RNF8-dependent pathway is required for cell survival after DNA damage.</title>
        <authorList>
            <person name="Gong Z."/>
            <person name="Cho Y.-W."/>
            <person name="Kim J.-E."/>
            <person name="Ge K."/>
            <person name="Chen J."/>
        </authorList>
    </citation>
    <scope>FUNCTION</scope>
    <scope>INTERACTION WITH PAXIP1</scope>
</reference>
<reference key="7">
    <citation type="journal article" date="2013" name="J. Biol. Chem.">
        <title>PA1 protein, a new competitive decelerator acting at more than one step to impede glucocorticoid receptor-mediated transactivation.</title>
        <authorList>
            <person name="Zhang Z."/>
            <person name="Sun Y."/>
            <person name="Cho Y.W."/>
            <person name="Chow C.C."/>
            <person name="Simons S.S. Jr."/>
        </authorList>
    </citation>
    <scope>FUNCTION</scope>
    <scope>INTERACTION WITH NR3C1 AND AR</scope>
</reference>
<accession>Q9BTK6</accession>
<accession>A2ICR6</accession>
<protein>
    <recommendedName>
        <fullName>PAXIP1-associated glutamate-rich protein 1</fullName>
    </recommendedName>
    <alternativeName>
        <fullName evidence="8">Glutamate-rich coactivator interacting with SRC1</fullName>
        <shortName evidence="8">GAS</shortName>
    </alternativeName>
    <alternativeName>
        <fullName>PAXIP1-associated protein 1</fullName>
    </alternativeName>
    <alternativeName>
        <fullName>PTIP-associated protein 1</fullName>
    </alternativeName>
</protein>
<evidence type="ECO:0000250" key="1">
    <source>
        <dbReference type="UniProtKB" id="Q5M865"/>
    </source>
</evidence>
<evidence type="ECO:0000250" key="2">
    <source>
        <dbReference type="UniProtKB" id="Q99L02"/>
    </source>
</evidence>
<evidence type="ECO:0000256" key="3">
    <source>
        <dbReference type="SAM" id="MobiDB-lite"/>
    </source>
</evidence>
<evidence type="ECO:0000269" key="4">
    <source>
    </source>
</evidence>
<evidence type="ECO:0000269" key="5">
    <source>
    </source>
</evidence>
<evidence type="ECO:0000269" key="6">
    <source>
    </source>
</evidence>
<evidence type="ECO:0000269" key="7">
    <source>
    </source>
</evidence>
<evidence type="ECO:0000303" key="8">
    <source>
    </source>
</evidence>
<evidence type="ECO:0000305" key="9"/>
<sequence>MSLARGHGDTAASTAAPLSEEGEVTSGLQALAVEDTGGPSASAGKAEDEGEGGREETEREGSGGEEAQGEVPSAGGEEPAEEDSEDWCVPCSDEEVELPADGQPWMPPPSEIQRLYELLAAHGTLELQAEILPRRPPTPEAQSEEERSDEEPEAKEEEEEKPHMPTEFDFDDEPVTPKDSLIDRRRTPGSSARSQKREARLDKVLSDMKRHKKLEEQILRTGRDLFSLDSEDPSPASPPLRSSGSSLFPRQRKY</sequence>
<organism>
    <name type="scientific">Homo sapiens</name>
    <name type="common">Human</name>
    <dbReference type="NCBI Taxonomy" id="9606"/>
    <lineage>
        <taxon>Eukaryota</taxon>
        <taxon>Metazoa</taxon>
        <taxon>Chordata</taxon>
        <taxon>Craniata</taxon>
        <taxon>Vertebrata</taxon>
        <taxon>Euteleostomi</taxon>
        <taxon>Mammalia</taxon>
        <taxon>Eutheria</taxon>
        <taxon>Euarchontoglires</taxon>
        <taxon>Primates</taxon>
        <taxon>Haplorrhini</taxon>
        <taxon>Catarrhini</taxon>
        <taxon>Hominidae</taxon>
        <taxon>Homo</taxon>
    </lineage>
</organism>